<keyword id="KW-1185">Reference proteome</keyword>
<keyword id="KW-0687">Ribonucleoprotein</keyword>
<keyword id="KW-0689">Ribosomal protein</keyword>
<keyword id="KW-0694">RNA-binding</keyword>
<keyword id="KW-0699">rRNA-binding</keyword>
<dbReference type="EMBL" id="AE016877">
    <property type="protein sequence ID" value="AAP07227.1"/>
    <property type="molecule type" value="Genomic_DNA"/>
</dbReference>
<dbReference type="RefSeq" id="NP_830026.1">
    <property type="nucleotide sequence ID" value="NC_004722.1"/>
</dbReference>
<dbReference type="RefSeq" id="WP_000086558.1">
    <property type="nucleotide sequence ID" value="NZ_CP138336.1"/>
</dbReference>
<dbReference type="SMR" id="Q81J27"/>
<dbReference type="STRING" id="226900.BC_0146"/>
<dbReference type="MetOSite" id="Q81J27"/>
<dbReference type="GeneID" id="93010928"/>
<dbReference type="KEGG" id="bce:BC0146"/>
<dbReference type="PATRIC" id="fig|226900.8.peg.147"/>
<dbReference type="HOGENOM" id="CLU_065464_1_2_9"/>
<dbReference type="OrthoDB" id="9805007at2"/>
<dbReference type="Proteomes" id="UP000001417">
    <property type="component" value="Chromosome"/>
</dbReference>
<dbReference type="GO" id="GO:0022625">
    <property type="term" value="C:cytosolic large ribosomal subunit"/>
    <property type="evidence" value="ECO:0000318"/>
    <property type="project" value="GO_Central"/>
</dbReference>
<dbReference type="GO" id="GO:0019843">
    <property type="term" value="F:rRNA binding"/>
    <property type="evidence" value="ECO:0007669"/>
    <property type="project" value="UniProtKB-UniRule"/>
</dbReference>
<dbReference type="GO" id="GO:0003735">
    <property type="term" value="F:structural constituent of ribosome"/>
    <property type="evidence" value="ECO:0000318"/>
    <property type="project" value="GO_Central"/>
</dbReference>
<dbReference type="GO" id="GO:0002181">
    <property type="term" value="P:cytoplasmic translation"/>
    <property type="evidence" value="ECO:0000318"/>
    <property type="project" value="GO_Central"/>
</dbReference>
<dbReference type="FunFam" id="3.90.930.12:FF:000001">
    <property type="entry name" value="50S ribosomal protein L6"/>
    <property type="match status" value="1"/>
</dbReference>
<dbReference type="FunFam" id="3.90.930.12:FF:000002">
    <property type="entry name" value="50S ribosomal protein L6"/>
    <property type="match status" value="1"/>
</dbReference>
<dbReference type="Gene3D" id="3.90.930.12">
    <property type="entry name" value="Ribosomal protein L6, alpha-beta domain"/>
    <property type="match status" value="2"/>
</dbReference>
<dbReference type="HAMAP" id="MF_01365_B">
    <property type="entry name" value="Ribosomal_uL6_B"/>
    <property type="match status" value="1"/>
</dbReference>
<dbReference type="InterPro" id="IPR000702">
    <property type="entry name" value="Ribosomal_uL6-like"/>
</dbReference>
<dbReference type="InterPro" id="IPR036789">
    <property type="entry name" value="Ribosomal_uL6-like_a/b-dom_sf"/>
</dbReference>
<dbReference type="InterPro" id="IPR020040">
    <property type="entry name" value="Ribosomal_uL6_a/b-dom"/>
</dbReference>
<dbReference type="InterPro" id="IPR019906">
    <property type="entry name" value="Ribosomal_uL6_bac-type"/>
</dbReference>
<dbReference type="InterPro" id="IPR002358">
    <property type="entry name" value="Ribosomal_uL6_CS"/>
</dbReference>
<dbReference type="NCBIfam" id="TIGR03654">
    <property type="entry name" value="L6_bact"/>
    <property type="match status" value="1"/>
</dbReference>
<dbReference type="PANTHER" id="PTHR11655">
    <property type="entry name" value="60S/50S RIBOSOMAL PROTEIN L6/L9"/>
    <property type="match status" value="1"/>
</dbReference>
<dbReference type="PANTHER" id="PTHR11655:SF14">
    <property type="entry name" value="LARGE RIBOSOMAL SUBUNIT PROTEIN UL6M"/>
    <property type="match status" value="1"/>
</dbReference>
<dbReference type="Pfam" id="PF00347">
    <property type="entry name" value="Ribosomal_L6"/>
    <property type="match status" value="2"/>
</dbReference>
<dbReference type="PIRSF" id="PIRSF002162">
    <property type="entry name" value="Ribosomal_L6"/>
    <property type="match status" value="1"/>
</dbReference>
<dbReference type="PRINTS" id="PR00059">
    <property type="entry name" value="RIBOSOMALL6"/>
</dbReference>
<dbReference type="SUPFAM" id="SSF56053">
    <property type="entry name" value="Ribosomal protein L6"/>
    <property type="match status" value="2"/>
</dbReference>
<dbReference type="PROSITE" id="PS00525">
    <property type="entry name" value="RIBOSOMAL_L6_1"/>
    <property type="match status" value="1"/>
</dbReference>
<protein>
    <recommendedName>
        <fullName evidence="1">Large ribosomal subunit protein uL6</fullName>
    </recommendedName>
    <alternativeName>
        <fullName evidence="2">50S ribosomal protein L6</fullName>
    </alternativeName>
</protein>
<proteinExistence type="inferred from homology"/>
<evidence type="ECO:0000255" key="1">
    <source>
        <dbReference type="HAMAP-Rule" id="MF_01365"/>
    </source>
</evidence>
<evidence type="ECO:0000305" key="2"/>
<gene>
    <name evidence="1" type="primary">rplF</name>
    <name type="ordered locus">BC_0146</name>
</gene>
<reference key="1">
    <citation type="journal article" date="2003" name="Nature">
        <title>Genome sequence of Bacillus cereus and comparative analysis with Bacillus anthracis.</title>
        <authorList>
            <person name="Ivanova N."/>
            <person name="Sorokin A."/>
            <person name="Anderson I."/>
            <person name="Galleron N."/>
            <person name="Candelon B."/>
            <person name="Kapatral V."/>
            <person name="Bhattacharyya A."/>
            <person name="Reznik G."/>
            <person name="Mikhailova N."/>
            <person name="Lapidus A."/>
            <person name="Chu L."/>
            <person name="Mazur M."/>
            <person name="Goltsman E."/>
            <person name="Larsen N."/>
            <person name="D'Souza M."/>
            <person name="Walunas T."/>
            <person name="Grechkin Y."/>
            <person name="Pusch G."/>
            <person name="Haselkorn R."/>
            <person name="Fonstein M."/>
            <person name="Ehrlich S.D."/>
            <person name="Overbeek R."/>
            <person name="Kyrpides N.C."/>
        </authorList>
    </citation>
    <scope>NUCLEOTIDE SEQUENCE [LARGE SCALE GENOMIC DNA]</scope>
    <source>
        <strain>ATCC 14579 / DSM 31 / CCUG 7414 / JCM 2152 / NBRC 15305 / NCIMB 9373 / NCTC 2599 / NRRL B-3711</strain>
    </source>
</reference>
<organism>
    <name type="scientific">Bacillus cereus (strain ATCC 14579 / DSM 31 / CCUG 7414 / JCM 2152 / NBRC 15305 / NCIMB 9373 / NCTC 2599 / NRRL B-3711)</name>
    <dbReference type="NCBI Taxonomy" id="226900"/>
    <lineage>
        <taxon>Bacteria</taxon>
        <taxon>Bacillati</taxon>
        <taxon>Bacillota</taxon>
        <taxon>Bacilli</taxon>
        <taxon>Bacillales</taxon>
        <taxon>Bacillaceae</taxon>
        <taxon>Bacillus</taxon>
        <taxon>Bacillus cereus group</taxon>
    </lineage>
</organism>
<sequence length="179" mass="19516">MSRIGKKILEIPAGVTITVAEDNTVTVKGPKGELTRTFNADMLIKIEENTLTVERPSEQKEHRALHGTTRALIGNMVEGVTEGFARGLELVGVGYRAQKQGDKLVLSVGYSHPVEMTPEAGLEVEVPAPTKIVIKGIDKQRVGEFAANIRAVRAPEPYKGKGIRYEGEVVRRKEGKTAK</sequence>
<name>RL6_BACCR</name>
<comment type="function">
    <text evidence="1">This protein binds to the 23S rRNA, and is important in its secondary structure. It is located near the subunit interface in the base of the L7/L12 stalk, and near the tRNA binding site of the peptidyltransferase center.</text>
</comment>
<comment type="subunit">
    <text evidence="1">Part of the 50S ribosomal subunit.</text>
</comment>
<comment type="similarity">
    <text evidence="1">Belongs to the universal ribosomal protein uL6 family.</text>
</comment>
<accession>Q81J27</accession>
<feature type="chain" id="PRO_0000260840" description="Large ribosomal subunit protein uL6">
    <location>
        <begin position="1"/>
        <end position="179"/>
    </location>
</feature>